<feature type="chain" id="PRO_0000281908" description="Centrosomal protein POC5">
    <location>
        <begin position="1"/>
        <end position="575"/>
    </location>
</feature>
<feature type="repeat" description="Centrin-binding (CBR) 1">
    <location>
        <begin position="142"/>
        <end position="173"/>
    </location>
</feature>
<feature type="repeat" description="Centrin-binding (CBR) 2">
    <location>
        <begin position="231"/>
        <end position="262"/>
    </location>
</feature>
<feature type="repeat" description="Centrin-binding (CBR) 3">
    <location>
        <begin position="263"/>
        <end position="295"/>
    </location>
</feature>
<feature type="region of interest" description="Disordered" evidence="2">
    <location>
        <begin position="1"/>
        <end position="26"/>
    </location>
</feature>
<feature type="region of interest" description="Disordered" evidence="2">
    <location>
        <begin position="376"/>
        <end position="411"/>
    </location>
</feature>
<feature type="region of interest" description="Disordered" evidence="2">
    <location>
        <begin position="538"/>
        <end position="575"/>
    </location>
</feature>
<feature type="coiled-coil region" evidence="1">
    <location>
        <begin position="191"/>
        <end position="222"/>
    </location>
</feature>
<feature type="coiled-coil region" evidence="1">
    <location>
        <begin position="316"/>
        <end position="355"/>
    </location>
</feature>
<feature type="compositionally biased region" description="Basic and acidic residues" evidence="2">
    <location>
        <begin position="382"/>
        <end position="400"/>
    </location>
</feature>
<feature type="compositionally biased region" description="Polar residues" evidence="2">
    <location>
        <begin position="545"/>
        <end position="569"/>
    </location>
</feature>
<feature type="modified residue" description="Phosphoserine" evidence="14 17">
    <location>
        <position position="105"/>
    </location>
</feature>
<feature type="modified residue" description="Phosphoserine" evidence="13 14 16 17">
    <location>
        <position position="109"/>
    </location>
</feature>
<feature type="modified residue" description="N6-acetyllysine" evidence="15">
    <location>
        <position position="538"/>
    </location>
</feature>
<feature type="modified residue" description="Phosphoserine" evidence="17">
    <location>
        <position position="564"/>
    </location>
</feature>
<feature type="splice variant" id="VSP_024098" description="In isoform 2." evidence="11">
    <location>
        <begin position="1"/>
        <end position="117"/>
    </location>
</feature>
<feature type="splice variant" id="VSP_024099" description="In isoform 3." evidence="10 11">
    <original>MSSDEEKYSLPVVQNDSSRGSSVSSNLQ</original>
    <variation>MKW</variation>
    <location>
        <begin position="1"/>
        <end position="28"/>
    </location>
</feature>
<feature type="splice variant" id="VSP_024100" description="In isoform 2." evidence="11">
    <location>
        <begin position="470"/>
        <end position="528"/>
    </location>
</feature>
<feature type="sequence variant" id="VAR_031324" description="In dbSNP:rs2307111." evidence="4 5">
    <original>H</original>
    <variation>R</variation>
    <location>
        <position position="36"/>
    </location>
</feature>
<feature type="sequence variant" id="VAR_031325" description="In dbSNP:rs17672542." evidence="4">
    <original>I</original>
    <variation>T</variation>
    <location>
        <position position="85"/>
    </location>
</feature>
<feature type="sequence variant" id="VAR_050778" description="In dbSNP:rs34678567.">
    <original>A</original>
    <variation>T</variation>
    <location>
        <position position="446"/>
    </location>
</feature>
<feature type="sequence conflict" description="In Ref. 2; AAH65750." evidence="12" ref="2">
    <original>T</original>
    <variation>A</variation>
    <location>
        <position position="41"/>
    </location>
</feature>
<feature type="sequence conflict" description="In Ref. 1; BAC04054." evidence="12" ref="1">
    <original>C</original>
    <variation>R</variation>
    <location>
        <position position="47"/>
    </location>
</feature>
<dbReference type="EMBL" id="AK093098">
    <property type="protein sequence ID" value="BAC04054.1"/>
    <property type="molecule type" value="mRNA"/>
</dbReference>
<dbReference type="EMBL" id="AK296071">
    <property type="protein sequence ID" value="BAG58829.1"/>
    <property type="molecule type" value="mRNA"/>
</dbReference>
<dbReference type="EMBL" id="BC065750">
    <property type="protein sequence ID" value="AAH65750.1"/>
    <property type="status" value="ALT_TERM"/>
    <property type="molecule type" value="mRNA"/>
</dbReference>
<dbReference type="EMBL" id="BC101326">
    <property type="protein sequence ID" value="AAI01327.1"/>
    <property type="molecule type" value="mRNA"/>
</dbReference>
<dbReference type="EMBL" id="BC101325">
    <property type="protein sequence ID" value="AAI01326.1"/>
    <property type="molecule type" value="mRNA"/>
</dbReference>
<dbReference type="EMBL" id="BC101327">
    <property type="protein sequence ID" value="AAI01328.1"/>
    <property type="molecule type" value="mRNA"/>
</dbReference>
<dbReference type="EMBL" id="BC101328">
    <property type="status" value="NOT_ANNOTATED_CDS"/>
    <property type="molecule type" value="mRNA"/>
</dbReference>
<dbReference type="CCDS" id="CCDS47236.1">
    <molecule id="Q8NA72-1"/>
</dbReference>
<dbReference type="CCDS" id="CCDS47237.1">
    <molecule id="Q8NA72-3"/>
</dbReference>
<dbReference type="RefSeq" id="NP_001092741.1">
    <molecule id="Q8NA72-1"/>
    <property type="nucleotide sequence ID" value="NM_001099271.2"/>
</dbReference>
<dbReference type="RefSeq" id="NP_689621.2">
    <molecule id="Q8NA72-3"/>
    <property type="nucleotide sequence ID" value="NM_152408.3"/>
</dbReference>
<dbReference type="SMR" id="Q8NA72"/>
<dbReference type="BioGRID" id="126396">
    <property type="interactions" value="98"/>
</dbReference>
<dbReference type="FunCoup" id="Q8NA72">
    <property type="interactions" value="2591"/>
</dbReference>
<dbReference type="IntAct" id="Q8NA72">
    <property type="interactions" value="295"/>
</dbReference>
<dbReference type="MINT" id="Q8NA72"/>
<dbReference type="STRING" id="9606.ENSP00000410216"/>
<dbReference type="GlyCosmos" id="Q8NA72">
    <property type="glycosylation" value="1 site, 2 glycans"/>
</dbReference>
<dbReference type="GlyGen" id="Q8NA72">
    <property type="glycosylation" value="1 site, 2 O-linked glycans (1 site)"/>
</dbReference>
<dbReference type="iPTMnet" id="Q8NA72"/>
<dbReference type="PhosphoSitePlus" id="Q8NA72"/>
<dbReference type="BioMuta" id="POC5"/>
<dbReference type="DMDM" id="143955298"/>
<dbReference type="jPOST" id="Q8NA72"/>
<dbReference type="MassIVE" id="Q8NA72"/>
<dbReference type="PaxDb" id="9606-ENSP00000410216"/>
<dbReference type="PeptideAtlas" id="Q8NA72"/>
<dbReference type="ProteomicsDB" id="72650">
    <molecule id="Q8NA72-1"/>
</dbReference>
<dbReference type="ProteomicsDB" id="72651">
    <molecule id="Q8NA72-2"/>
</dbReference>
<dbReference type="ProteomicsDB" id="72652">
    <molecule id="Q8NA72-3"/>
</dbReference>
<dbReference type="Pumba" id="Q8NA72"/>
<dbReference type="Antibodypedia" id="49002">
    <property type="antibodies" value="103 antibodies from 17 providers"/>
</dbReference>
<dbReference type="DNASU" id="134359"/>
<dbReference type="Ensembl" id="ENST00000428202.7">
    <molecule id="Q8NA72-1"/>
    <property type="protein sequence ID" value="ENSP00000410216.2"/>
    <property type="gene ID" value="ENSG00000152359.15"/>
</dbReference>
<dbReference type="Ensembl" id="ENST00000446329.6">
    <molecule id="Q8NA72-3"/>
    <property type="protein sequence ID" value="ENSP00000399481.2"/>
    <property type="gene ID" value="ENSG00000152359.15"/>
</dbReference>
<dbReference type="Ensembl" id="ENST00000510798.5">
    <molecule id="Q8NA72-2"/>
    <property type="protein sequence ID" value="ENSP00000426796.1"/>
    <property type="gene ID" value="ENSG00000152359.15"/>
</dbReference>
<dbReference type="GeneID" id="134359"/>
<dbReference type="KEGG" id="hsa:134359"/>
<dbReference type="MANE-Select" id="ENST00000428202.7">
    <property type="protein sequence ID" value="ENSP00000410216.2"/>
    <property type="RefSeq nucleotide sequence ID" value="NM_001099271.2"/>
    <property type="RefSeq protein sequence ID" value="NP_001092741.1"/>
</dbReference>
<dbReference type="UCSC" id="uc003keg.5">
    <molecule id="Q8NA72-1"/>
    <property type="organism name" value="human"/>
</dbReference>
<dbReference type="AGR" id="HGNC:26658"/>
<dbReference type="CTD" id="134359"/>
<dbReference type="DisGeNET" id="134359"/>
<dbReference type="GeneCards" id="POC5"/>
<dbReference type="HGNC" id="HGNC:26658">
    <property type="gene designation" value="POC5"/>
</dbReference>
<dbReference type="HPA" id="ENSG00000152359">
    <property type="expression patterns" value="Low tissue specificity"/>
</dbReference>
<dbReference type="MalaCards" id="POC5"/>
<dbReference type="MIM" id="617880">
    <property type="type" value="gene"/>
</dbReference>
<dbReference type="neXtProt" id="NX_Q8NA72"/>
<dbReference type="OpenTargets" id="ENSG00000152359"/>
<dbReference type="PharmGKB" id="PA165660427"/>
<dbReference type="VEuPathDB" id="HostDB:ENSG00000152359"/>
<dbReference type="eggNOG" id="ENOG502QUKU">
    <property type="taxonomic scope" value="Eukaryota"/>
</dbReference>
<dbReference type="GeneTree" id="ENSGT00390000004454"/>
<dbReference type="InParanoid" id="Q8NA72"/>
<dbReference type="OMA" id="KKVWKAW"/>
<dbReference type="OrthoDB" id="10064898at2759"/>
<dbReference type="PAN-GO" id="Q8NA72">
    <property type="GO annotations" value="1 GO annotation based on evolutionary models"/>
</dbReference>
<dbReference type="PhylomeDB" id="Q8NA72"/>
<dbReference type="TreeFam" id="TF329296"/>
<dbReference type="PathwayCommons" id="Q8NA72"/>
<dbReference type="SignaLink" id="Q8NA72"/>
<dbReference type="BioGRID-ORCS" id="134359">
    <property type="hits" value="20 hits in 1159 CRISPR screens"/>
</dbReference>
<dbReference type="CD-CODE" id="8C2F96ED">
    <property type="entry name" value="Centrosome"/>
</dbReference>
<dbReference type="ChiTaRS" id="POC5">
    <property type="organism name" value="human"/>
</dbReference>
<dbReference type="GenomeRNAi" id="134359"/>
<dbReference type="Pharos" id="Q8NA72">
    <property type="development level" value="Tbio"/>
</dbReference>
<dbReference type="PRO" id="PR:Q8NA72"/>
<dbReference type="Proteomes" id="UP000005640">
    <property type="component" value="Chromosome 5"/>
</dbReference>
<dbReference type="RNAct" id="Q8NA72">
    <property type="molecule type" value="protein"/>
</dbReference>
<dbReference type="Bgee" id="ENSG00000152359">
    <property type="expression patterns" value="Expressed in secondary oocyte and 156 other cell types or tissues"/>
</dbReference>
<dbReference type="ExpressionAtlas" id="Q8NA72">
    <property type="expression patterns" value="baseline and differential"/>
</dbReference>
<dbReference type="GO" id="GO:0005814">
    <property type="term" value="C:centriole"/>
    <property type="evidence" value="ECO:0000314"/>
    <property type="project" value="UniProtKB"/>
</dbReference>
<dbReference type="GO" id="GO:0005813">
    <property type="term" value="C:centrosome"/>
    <property type="evidence" value="ECO:0000314"/>
    <property type="project" value="UniProtKB"/>
</dbReference>
<dbReference type="GO" id="GO:0005737">
    <property type="term" value="C:cytoplasm"/>
    <property type="evidence" value="ECO:0007669"/>
    <property type="project" value="UniProtKB-KW"/>
</dbReference>
<dbReference type="GO" id="GO:0032391">
    <property type="term" value="C:photoreceptor connecting cilium"/>
    <property type="evidence" value="ECO:0000318"/>
    <property type="project" value="GO_Central"/>
</dbReference>
<dbReference type="GO" id="GO:0061511">
    <property type="term" value="P:centriole elongation"/>
    <property type="evidence" value="ECO:0000315"/>
    <property type="project" value="UniProtKB"/>
</dbReference>
<dbReference type="GO" id="GO:0042462">
    <property type="term" value="P:eye photoreceptor cell development"/>
    <property type="evidence" value="ECO:0000318"/>
    <property type="project" value="GO_Central"/>
</dbReference>
<dbReference type="GO" id="GO:1903723">
    <property type="term" value="P:negative regulation of centriole elongation"/>
    <property type="evidence" value="ECO:0000315"/>
    <property type="project" value="UniProtKB"/>
</dbReference>
<dbReference type="InterPro" id="IPR033351">
    <property type="entry name" value="POC5"/>
</dbReference>
<dbReference type="PANTHER" id="PTHR28618">
    <property type="entry name" value="CENTROSOMAL PROTEIN POC5"/>
    <property type="match status" value="1"/>
</dbReference>
<dbReference type="PANTHER" id="PTHR28618:SF1">
    <property type="entry name" value="CENTROSOMAL PROTEIN POC5"/>
    <property type="match status" value="1"/>
</dbReference>
<name>POC5_HUMAN</name>
<sequence length="575" mass="63351">MSSDEEKYSLPVVQNDSSRGSSVSSNLQEEYEELLHYAIVTPNIEPCASQSSHPKGELVPDVRISTIHDILHSQGNNSEVRETAIEVGKGCDFHISSHSKTDESSPVLSPRKPSHPVMDFFSSHLLADSSSPATNSSHTDAHEILVSDFLVSDENLQKMENVLDLWSSGLKTNIISELSKWRLNFIDWHRMEMRKEKEKHAAHLKQLCNQINELKELQKTFEISIGRKDEVISSLSHAIGKQKEKIELMRTFFHWRIGHVRARQDVYEGKLADQYYQRTLLKKVWKVWRSVVQKQWKDVVERACQARAEEVCIQISNDYEAKVAMLSGALENAKAEIQRMQHEKEHFEDSMKKAFMRGVCALNLEAMTIFQNRNDAGIDSTNNKKEEYGPGVQGKEHSAHLDPSAPPMPLPVTSPLLPSPPAAVGGASATAVPSAASMTSTRAASASSVHVPVSALGAGSAATAASEEMYVPRVVTSAQQKAGRTITARITGRCDFASKNRISSSLAIMGVSPPMSSVVVEKHHPVTVQTIPQATAAKYPRTIHPESSTSASRSLGTRSAHTQSLTSVHSIKVVD</sequence>
<reference key="1">
    <citation type="journal article" date="2004" name="Nat. Genet.">
        <title>Complete sequencing and characterization of 21,243 full-length human cDNAs.</title>
        <authorList>
            <person name="Ota T."/>
            <person name="Suzuki Y."/>
            <person name="Nishikawa T."/>
            <person name="Otsuki T."/>
            <person name="Sugiyama T."/>
            <person name="Irie R."/>
            <person name="Wakamatsu A."/>
            <person name="Hayashi K."/>
            <person name="Sato H."/>
            <person name="Nagai K."/>
            <person name="Kimura K."/>
            <person name="Makita H."/>
            <person name="Sekine M."/>
            <person name="Obayashi M."/>
            <person name="Nishi T."/>
            <person name="Shibahara T."/>
            <person name="Tanaka T."/>
            <person name="Ishii S."/>
            <person name="Yamamoto J."/>
            <person name="Saito K."/>
            <person name="Kawai Y."/>
            <person name="Isono Y."/>
            <person name="Nakamura Y."/>
            <person name="Nagahari K."/>
            <person name="Murakami K."/>
            <person name="Yasuda T."/>
            <person name="Iwayanagi T."/>
            <person name="Wagatsuma M."/>
            <person name="Shiratori A."/>
            <person name="Sudo H."/>
            <person name="Hosoiri T."/>
            <person name="Kaku Y."/>
            <person name="Kodaira H."/>
            <person name="Kondo H."/>
            <person name="Sugawara M."/>
            <person name="Takahashi M."/>
            <person name="Kanda K."/>
            <person name="Yokoi T."/>
            <person name="Furuya T."/>
            <person name="Kikkawa E."/>
            <person name="Omura Y."/>
            <person name="Abe K."/>
            <person name="Kamihara K."/>
            <person name="Katsuta N."/>
            <person name="Sato K."/>
            <person name="Tanikawa M."/>
            <person name="Yamazaki M."/>
            <person name="Ninomiya K."/>
            <person name="Ishibashi T."/>
            <person name="Yamashita H."/>
            <person name="Murakawa K."/>
            <person name="Fujimori K."/>
            <person name="Tanai H."/>
            <person name="Kimata M."/>
            <person name="Watanabe M."/>
            <person name="Hiraoka S."/>
            <person name="Chiba Y."/>
            <person name="Ishida S."/>
            <person name="Ono Y."/>
            <person name="Takiguchi S."/>
            <person name="Watanabe S."/>
            <person name="Yosida M."/>
            <person name="Hotuta T."/>
            <person name="Kusano J."/>
            <person name="Kanehori K."/>
            <person name="Takahashi-Fujii A."/>
            <person name="Hara H."/>
            <person name="Tanase T.-O."/>
            <person name="Nomura Y."/>
            <person name="Togiya S."/>
            <person name="Komai F."/>
            <person name="Hara R."/>
            <person name="Takeuchi K."/>
            <person name="Arita M."/>
            <person name="Imose N."/>
            <person name="Musashino K."/>
            <person name="Yuuki H."/>
            <person name="Oshima A."/>
            <person name="Sasaki N."/>
            <person name="Aotsuka S."/>
            <person name="Yoshikawa Y."/>
            <person name="Matsunawa H."/>
            <person name="Ichihara T."/>
            <person name="Shiohata N."/>
            <person name="Sano S."/>
            <person name="Moriya S."/>
            <person name="Momiyama H."/>
            <person name="Satoh N."/>
            <person name="Takami S."/>
            <person name="Terashima Y."/>
            <person name="Suzuki O."/>
            <person name="Nakagawa S."/>
            <person name="Senoh A."/>
            <person name="Mizoguchi H."/>
            <person name="Goto Y."/>
            <person name="Shimizu F."/>
            <person name="Wakebe H."/>
            <person name="Hishigaki H."/>
            <person name="Watanabe T."/>
            <person name="Sugiyama A."/>
            <person name="Takemoto M."/>
            <person name="Kawakami B."/>
            <person name="Yamazaki M."/>
            <person name="Watanabe K."/>
            <person name="Kumagai A."/>
            <person name="Itakura S."/>
            <person name="Fukuzumi Y."/>
            <person name="Fujimori Y."/>
            <person name="Komiyama M."/>
            <person name="Tashiro H."/>
            <person name="Tanigami A."/>
            <person name="Fujiwara T."/>
            <person name="Ono T."/>
            <person name="Yamada K."/>
            <person name="Fujii Y."/>
            <person name="Ozaki K."/>
            <person name="Hirao M."/>
            <person name="Ohmori Y."/>
            <person name="Kawabata A."/>
            <person name="Hikiji T."/>
            <person name="Kobatake N."/>
            <person name="Inagaki H."/>
            <person name="Ikema Y."/>
            <person name="Okamoto S."/>
            <person name="Okitani R."/>
            <person name="Kawakami T."/>
            <person name="Noguchi S."/>
            <person name="Itoh T."/>
            <person name="Shigeta K."/>
            <person name="Senba T."/>
            <person name="Matsumura K."/>
            <person name="Nakajima Y."/>
            <person name="Mizuno T."/>
            <person name="Morinaga M."/>
            <person name="Sasaki M."/>
            <person name="Togashi T."/>
            <person name="Oyama M."/>
            <person name="Hata H."/>
            <person name="Watanabe M."/>
            <person name="Komatsu T."/>
            <person name="Mizushima-Sugano J."/>
            <person name="Satoh T."/>
            <person name="Shirai Y."/>
            <person name="Takahashi Y."/>
            <person name="Nakagawa K."/>
            <person name="Okumura K."/>
            <person name="Nagase T."/>
            <person name="Nomura N."/>
            <person name="Kikuchi H."/>
            <person name="Masuho Y."/>
            <person name="Yamashita R."/>
            <person name="Nakai K."/>
            <person name="Yada T."/>
            <person name="Nakamura Y."/>
            <person name="Ohara O."/>
            <person name="Isogai T."/>
            <person name="Sugano S."/>
        </authorList>
    </citation>
    <scope>NUCLEOTIDE SEQUENCE [LARGE SCALE MRNA] (ISOFORMS 1 AND 3)</scope>
    <scope>VARIANTS ARG-36 AND THR-85</scope>
    <source>
        <tissue>Testis</tissue>
        <tissue>Thalamus</tissue>
    </source>
</reference>
<reference key="2">
    <citation type="journal article" date="2004" name="Genome Res.">
        <title>The status, quality, and expansion of the NIH full-length cDNA project: the Mammalian Gene Collection (MGC).</title>
        <authorList>
            <consortium name="The MGC Project Team"/>
        </authorList>
    </citation>
    <scope>NUCLEOTIDE SEQUENCE [LARGE SCALE MRNA] (ISOFORMS 2 AND 3)</scope>
    <scope>NUCLEOTIDE SEQUENCE [LARGE SCALE MRNA] OF 1-219 (ISOFORM 1)</scope>
    <scope>VARIANT ARG-36</scope>
    <source>
        <tissue>Bone marrow</tissue>
    </source>
</reference>
<reference key="3">
    <citation type="journal article" date="2003" name="Nature">
        <title>Proteomic characterization of the human centrosome by protein correlation profiling.</title>
        <authorList>
            <person name="Andersen J.S."/>
            <person name="Wilkinson C.J."/>
            <person name="Mayor T."/>
            <person name="Mortensen P."/>
            <person name="Nigg E.A."/>
            <person name="Mann M."/>
        </authorList>
    </citation>
    <scope>IDENTIFICATION BY MASS SPECTROMETRY</scope>
    <scope>SUBCELLULAR LOCATION [LARGE SCALE ANALYSIS]</scope>
    <source>
        <tissue>Lymphoblast</tissue>
    </source>
</reference>
<reference key="4">
    <citation type="journal article" date="2004" name="Anal. Chem.">
        <title>Robust phosphoproteomic profiling of tyrosine phosphorylation sites from human T cells using immobilized metal affinity chromatography and tandem mass spectrometry.</title>
        <authorList>
            <person name="Brill L.M."/>
            <person name="Salomon A.R."/>
            <person name="Ficarro S.B."/>
            <person name="Mukherji M."/>
            <person name="Stettler-Gill M."/>
            <person name="Peters E.C."/>
        </authorList>
    </citation>
    <scope>PHOSPHORYLATION [LARGE SCALE ANALYSIS] AT SER-109</scope>
    <scope>IDENTIFICATION BY MASS SPECTROMETRY [LARGE SCALE ANALYSIS]</scope>
    <source>
        <tissue>Leukemic T-cell</tissue>
    </source>
</reference>
<reference key="5">
    <citation type="journal article" date="2008" name="Proc. Natl. Acad. Sci. U.S.A.">
        <title>A quantitative atlas of mitotic phosphorylation.</title>
        <authorList>
            <person name="Dephoure N."/>
            <person name="Zhou C."/>
            <person name="Villen J."/>
            <person name="Beausoleil S.A."/>
            <person name="Bakalarski C.E."/>
            <person name="Elledge S.J."/>
            <person name="Gygi S.P."/>
        </authorList>
    </citation>
    <scope>PHOSPHORYLATION [LARGE SCALE ANALYSIS] AT SER-105 AND SER-109</scope>
    <scope>IDENTIFICATION BY MASS SPECTROMETRY [LARGE SCALE ANALYSIS]</scope>
    <source>
        <tissue>Cervix carcinoma</tissue>
    </source>
</reference>
<reference key="6">
    <citation type="journal article" date="2009" name="J. Cell Biol.">
        <title>hPOC5 is a centrin-binding protein required for assembly of full-length centrioles.</title>
        <authorList>
            <person name="Azimzadeh J."/>
            <person name="Hergert P."/>
            <person name="Delouvee A."/>
            <person name="Euteneuer U."/>
            <person name="Formstecher E."/>
            <person name="Khodjakov A."/>
            <person name="Bornens M."/>
        </authorList>
    </citation>
    <scope>FUNCTION</scope>
    <scope>PHOSPHORYLATION</scope>
    <scope>SUBCELLULAR LOCATION</scope>
    <scope>INTERACTION WITH CETN2 AND CETN3</scope>
</reference>
<reference key="7">
    <citation type="journal article" date="2009" name="Sci. Signal.">
        <title>Quantitative phosphoproteomic analysis of T cell receptor signaling reveals system-wide modulation of protein-protein interactions.</title>
        <authorList>
            <person name="Mayya V."/>
            <person name="Lundgren D.H."/>
            <person name="Hwang S.-I."/>
            <person name="Rezaul K."/>
            <person name="Wu L."/>
            <person name="Eng J.K."/>
            <person name="Rodionov V."/>
            <person name="Han D.K."/>
        </authorList>
    </citation>
    <scope>PHOSPHORYLATION [LARGE SCALE ANALYSIS] AT SER-109</scope>
    <scope>IDENTIFICATION BY MASS SPECTROMETRY [LARGE SCALE ANALYSIS]</scope>
    <source>
        <tissue>Leukemic T-cell</tissue>
    </source>
</reference>
<reference key="8">
    <citation type="journal article" date="2009" name="Science">
        <title>Lysine acetylation targets protein complexes and co-regulates major cellular functions.</title>
        <authorList>
            <person name="Choudhary C."/>
            <person name="Kumar C."/>
            <person name="Gnad F."/>
            <person name="Nielsen M.L."/>
            <person name="Rehman M."/>
            <person name="Walther T.C."/>
            <person name="Olsen J.V."/>
            <person name="Mann M."/>
        </authorList>
    </citation>
    <scope>ACETYLATION [LARGE SCALE ANALYSIS] AT LYS-538</scope>
    <scope>IDENTIFICATION BY MASS SPECTROMETRY [LARGE SCALE ANALYSIS]</scope>
</reference>
<reference key="9">
    <citation type="journal article" date="2013" name="J. Proteome Res.">
        <title>Toward a comprehensive characterization of a human cancer cell phosphoproteome.</title>
        <authorList>
            <person name="Zhou H."/>
            <person name="Di Palma S."/>
            <person name="Preisinger C."/>
            <person name="Peng M."/>
            <person name="Polat A.N."/>
            <person name="Heck A.J."/>
            <person name="Mohammed S."/>
        </authorList>
    </citation>
    <scope>PHOSPHORYLATION [LARGE SCALE ANALYSIS] AT SER-105; SER-109 AND SER-564</scope>
    <scope>IDENTIFICATION BY MASS SPECTROMETRY [LARGE SCALE ANALYSIS]</scope>
    <source>
        <tissue>Cervix carcinoma</tissue>
        <tissue>Erythroleukemia</tissue>
    </source>
</reference>
<reference key="10">
    <citation type="journal article" date="2020" name="Sci. Adv.">
        <title>A helical inner scaffold provides a structural basis for centriole cohesion.</title>
        <authorList>
            <person name="Le Guennec M."/>
            <person name="Klena N."/>
            <person name="Gambarotto D."/>
            <person name="Laporte M.H."/>
            <person name="Tassin A.M."/>
            <person name="van den Hoek H."/>
            <person name="Erdmann P.S."/>
            <person name="Schaffer M."/>
            <person name="Kovacik L."/>
            <person name="Borgers S."/>
            <person name="Goldie K.N."/>
            <person name="Stahlberg H."/>
            <person name="Bornens M."/>
            <person name="Azimzadeh J."/>
            <person name="Engel B.D."/>
            <person name="Hamel V."/>
            <person name="Guichard P."/>
        </authorList>
    </citation>
    <scope>SUBCELLULAR LOCATION</scope>
    <scope>COMPLEX FORMATION WITH POC1B; CETN2 AND FAM161A</scope>
</reference>
<reference key="11">
    <citation type="journal article" date="2020" name="Elife">
        <title>WDR90 is a centriolar microtubule wall protein important for centriole architecture integrity.</title>
        <authorList>
            <person name="Steib E."/>
            <person name="Laporte M.H."/>
            <person name="Gambarotto D."/>
            <person name="Olieric N."/>
            <person name="Zheng C."/>
            <person name="Borgers S."/>
            <person name="Olieric V."/>
            <person name="Le Guennec M."/>
            <person name="Koll F."/>
            <person name="Tassin A.M."/>
            <person name="Steinmetz M.O."/>
            <person name="Guichard P."/>
            <person name="Hamel V."/>
        </authorList>
    </citation>
    <scope>FUNCTION</scope>
    <scope>SUBCELLULAR LOCATION</scope>
</reference>
<reference key="12">
    <citation type="journal article" date="2023" name="J. Cell Biol.">
        <title>CCDC15 localizes to the centriole inner scaffold and controls centriole length and integrity.</title>
        <authorList>
            <person name="Arslanhan M.D."/>
            <person name="Cengiz-Emek S."/>
            <person name="Odabasi E."/>
            <person name="Steib E."/>
            <person name="Hamel V."/>
            <person name="Guichard P."/>
            <person name="Firat-Karalar E.N."/>
        </authorList>
    </citation>
    <scope>FUNCTION</scope>
    <scope>INTERACTION WITH CCDC15</scope>
    <scope>SUBCELLULAR LOCATION</scope>
</reference>
<accession>Q8NA72</accession>
<accession>B4DJG7</accession>
<accession>Q494X7</accession>
<accession>Q494X9</accession>
<accession>Q6P085</accession>
<proteinExistence type="evidence at protein level"/>
<organism>
    <name type="scientific">Homo sapiens</name>
    <name type="common">Human</name>
    <dbReference type="NCBI Taxonomy" id="9606"/>
    <lineage>
        <taxon>Eukaryota</taxon>
        <taxon>Metazoa</taxon>
        <taxon>Chordata</taxon>
        <taxon>Craniata</taxon>
        <taxon>Vertebrata</taxon>
        <taxon>Euteleostomi</taxon>
        <taxon>Mammalia</taxon>
        <taxon>Eutheria</taxon>
        <taxon>Euarchontoglires</taxon>
        <taxon>Primates</taxon>
        <taxon>Haplorrhini</taxon>
        <taxon>Catarrhini</taxon>
        <taxon>Hominidae</taxon>
        <taxon>Homo</taxon>
    </lineage>
</organism>
<keyword id="KW-0007">Acetylation</keyword>
<keyword id="KW-0025">Alternative splicing</keyword>
<keyword id="KW-0131">Cell cycle</keyword>
<keyword id="KW-0175">Coiled coil</keyword>
<keyword id="KW-0963">Cytoplasm</keyword>
<keyword id="KW-0206">Cytoskeleton</keyword>
<keyword id="KW-0597">Phosphoprotein</keyword>
<keyword id="KW-1267">Proteomics identification</keyword>
<keyword id="KW-1185">Reference proteome</keyword>
<keyword id="KW-0677">Repeat</keyword>
<gene>
    <name type="primary">POC5</name>
    <name type="synonym">C5orf37</name>
</gene>
<protein>
    <recommendedName>
        <fullName>Centrosomal protein POC5</fullName>
    </recommendedName>
    <alternativeName>
        <fullName>Protein of centriole 5</fullName>
        <shortName>hPOC5</shortName>
    </alternativeName>
</protein>
<evidence type="ECO:0000255" key="1"/>
<evidence type="ECO:0000256" key="2">
    <source>
        <dbReference type="SAM" id="MobiDB-lite"/>
    </source>
</evidence>
<evidence type="ECO:0000269" key="3">
    <source>
    </source>
</evidence>
<evidence type="ECO:0000269" key="4">
    <source>
    </source>
</evidence>
<evidence type="ECO:0000269" key="5">
    <source>
    </source>
</evidence>
<evidence type="ECO:0000269" key="6">
    <source>
    </source>
</evidence>
<evidence type="ECO:0000269" key="7">
    <source>
    </source>
</evidence>
<evidence type="ECO:0000269" key="8">
    <source>
    </source>
</evidence>
<evidence type="ECO:0000269" key="9">
    <source>
    </source>
</evidence>
<evidence type="ECO:0000303" key="10">
    <source>
    </source>
</evidence>
<evidence type="ECO:0000303" key="11">
    <source>
    </source>
</evidence>
<evidence type="ECO:0000305" key="12"/>
<evidence type="ECO:0007744" key="13">
    <source>
    </source>
</evidence>
<evidence type="ECO:0007744" key="14">
    <source>
    </source>
</evidence>
<evidence type="ECO:0007744" key="15">
    <source>
    </source>
</evidence>
<evidence type="ECO:0007744" key="16">
    <source>
    </source>
</evidence>
<evidence type="ECO:0007744" key="17">
    <source>
    </source>
</evidence>
<comment type="function">
    <text evidence="6 8 9">Essential for the assembly of the distal half of centrioles, required for centriole elongation (PubMed:19349582, PubMed:32946374). Acts as a negative regulator of centriole elongation (PubMed:37934472).</text>
</comment>
<comment type="subunit">
    <text evidence="6 7 9">Interacts with CETN2 and CETN3 (PubMed:19349582). Forms a microtubule-associated complex with POC1B, CETN2 and FAM161A (PubMed:32110738). Interacts with CCDC15 (PubMed:37934472).</text>
</comment>
<comment type="interaction">
    <interactant intactId="EBI-2561090">
        <id>Q8NA72</id>
    </interactant>
    <interactant intactId="EBI-2512818">
        <id>Q12798</id>
        <label>CETN1</label>
    </interactant>
    <organismsDiffer>false</organismsDiffer>
    <experiments>9</experiments>
</comment>
<comment type="interaction">
    <interactant intactId="EBI-2561090">
        <id>Q8NA72</id>
    </interactant>
    <interactant intactId="EBI-1789926">
        <id>P41208</id>
        <label>CETN2</label>
    </interactant>
    <organismsDiffer>false</organismsDiffer>
    <experiments>14</experiments>
</comment>
<comment type="interaction">
    <interactant intactId="EBI-2561090">
        <id>Q8NA72</id>
    </interactant>
    <interactant intactId="EBI-712959">
        <id>O15182</id>
        <label>CETN3</label>
    </interactant>
    <organismsDiffer>false</organismsDiffer>
    <experiments>11</experiments>
</comment>
<comment type="interaction">
    <interactant intactId="EBI-2561090">
        <id>Q8NA72</id>
    </interactant>
    <interactant intactId="EBI-719941">
        <id>Q3B820</id>
        <label>FAM161A</label>
    </interactant>
    <organismsDiffer>false</organismsDiffer>
    <experiments>6</experiments>
</comment>
<comment type="interaction">
    <interactant intactId="EBI-2561090">
        <id>Q8NA72</id>
    </interactant>
    <interactant intactId="EBI-351772">
        <id>P68366</id>
        <label>TUBA4A</label>
    </interactant>
    <organismsDiffer>false</organismsDiffer>
    <experiments>5</experiments>
</comment>
<comment type="interaction">
    <interactant intactId="EBI-11751537">
        <id>Q8NA72-3</id>
    </interactant>
    <interactant intactId="EBI-2512818">
        <id>Q12798</id>
        <label>CETN1</label>
    </interactant>
    <organismsDiffer>false</organismsDiffer>
    <experiments>4</experiments>
</comment>
<comment type="interaction">
    <interactant intactId="EBI-11751537">
        <id>Q8NA72-3</id>
    </interactant>
    <interactant intactId="EBI-1789926">
        <id>P41208</id>
        <label>CETN2</label>
    </interactant>
    <organismsDiffer>false</organismsDiffer>
    <experiments>4</experiments>
</comment>
<comment type="interaction">
    <interactant intactId="EBI-11751537">
        <id>Q8NA72-3</id>
    </interactant>
    <interactant intactId="EBI-712959">
        <id>O15182</id>
        <label>CETN3</label>
    </interactant>
    <organismsDiffer>false</organismsDiffer>
    <experiments>8</experiments>
</comment>
<comment type="interaction">
    <interactant intactId="EBI-11751537">
        <id>Q8NA72-3</id>
    </interactant>
    <interactant intactId="EBI-719941">
        <id>Q3B820</id>
        <label>FAM161A</label>
    </interactant>
    <organismsDiffer>false</organismsDiffer>
    <experiments>3</experiments>
</comment>
<comment type="interaction">
    <interactant intactId="EBI-11751537">
        <id>Q8NA72-3</id>
    </interactant>
    <interactant intactId="EBI-352682">
        <id>P04792</id>
        <label>HSPB1</label>
    </interactant>
    <organismsDiffer>false</organismsDiffer>
    <experiments>3</experiments>
</comment>
<comment type="interaction">
    <interactant intactId="EBI-11751537">
        <id>Q8NA72-3</id>
    </interactant>
    <interactant intactId="EBI-10975473">
        <id>O60333-2</id>
        <label>KIF1B</label>
    </interactant>
    <organismsDiffer>false</organismsDiffer>
    <experiments>3</experiments>
</comment>
<comment type="interaction">
    <interactant intactId="EBI-11751537">
        <id>Q8NA72-3</id>
    </interactant>
    <interactant intactId="EBI-396669">
        <id>Q9Y3C5</id>
        <label>RNF11</label>
    </interactant>
    <organismsDiffer>false</organismsDiffer>
    <experiments>3</experiments>
</comment>
<comment type="subcellular location">
    <subcellularLocation>
        <location evidence="3 9">Cytoplasm</location>
        <location evidence="3 9">Cytoskeleton</location>
        <location evidence="3 9">Microtubule organizing center</location>
        <location evidence="3 9">Centrosome</location>
    </subcellularLocation>
    <subcellularLocation>
        <location evidence="6 7 8 9">Cytoplasm</location>
        <location evidence="6 7 8 9">Cytoskeleton</location>
        <location evidence="6 7 8 9">Microtubule organizing center</location>
        <location evidence="6 7 8 9">Centrosome</location>
        <location evidence="6 7 8 9">Centriole</location>
    </subcellularLocation>
    <text evidence="7 9">Localized to the distal portion of centrioles. Localizes to the inner scaffold in the central region of centrioles.</text>
</comment>
<comment type="alternative products">
    <event type="alternative splicing"/>
    <isoform>
        <id>Q8NA72-1</id>
        <name>1</name>
        <sequence type="displayed"/>
    </isoform>
    <isoform>
        <id>Q8NA72-2</id>
        <name>2</name>
        <sequence type="described" ref="VSP_024098 VSP_024100"/>
    </isoform>
    <isoform>
        <id>Q8NA72-3</id>
        <name>3</name>
        <sequence type="described" ref="VSP_024099"/>
    </isoform>
</comment>
<comment type="PTM">
    <text evidence="6">Hyperphosphorylated during recruitment to procentrioles in G2/M phase.</text>
</comment>
<comment type="similarity">
    <text evidence="12">Belongs to the POC5 family.</text>
</comment>
<comment type="sequence caution" evidence="12">
    <conflict type="frameshift">
        <sequence resource="EMBL" id="BC101328"/>
    </conflict>
</comment>
<comment type="sequence caution" evidence="12">
    <molecule>Isoform 3</molecule>
    <conflict type="frameshift">
        <sequence resource="EMBL" id="BC101328"/>
    </conflict>
</comment>